<gene>
    <name type="primary">tma22</name>
    <name type="ORF">An03g06830</name>
</gene>
<evidence type="ECO:0000250" key="1"/>
<evidence type="ECO:0000255" key="2">
    <source>
        <dbReference type="PROSITE-ProRule" id="PRU00200"/>
    </source>
</evidence>
<evidence type="ECO:0000305" key="3"/>
<reference key="1">
    <citation type="journal article" date="2007" name="Nat. Biotechnol.">
        <title>Genome sequencing and analysis of the versatile cell factory Aspergillus niger CBS 513.88.</title>
        <authorList>
            <person name="Pel H.J."/>
            <person name="de Winde J.H."/>
            <person name="Archer D.B."/>
            <person name="Dyer P.S."/>
            <person name="Hofmann G."/>
            <person name="Schaap P.J."/>
            <person name="Turner G."/>
            <person name="de Vries R.P."/>
            <person name="Albang R."/>
            <person name="Albermann K."/>
            <person name="Andersen M.R."/>
            <person name="Bendtsen J.D."/>
            <person name="Benen J.A.E."/>
            <person name="van den Berg M."/>
            <person name="Breestraat S."/>
            <person name="Caddick M.X."/>
            <person name="Contreras R."/>
            <person name="Cornell M."/>
            <person name="Coutinho P.M."/>
            <person name="Danchin E.G.J."/>
            <person name="Debets A.J.M."/>
            <person name="Dekker P."/>
            <person name="van Dijck P.W.M."/>
            <person name="van Dijk A."/>
            <person name="Dijkhuizen L."/>
            <person name="Driessen A.J.M."/>
            <person name="d'Enfert C."/>
            <person name="Geysens S."/>
            <person name="Goosen C."/>
            <person name="Groot G.S.P."/>
            <person name="de Groot P.W.J."/>
            <person name="Guillemette T."/>
            <person name="Henrissat B."/>
            <person name="Herweijer M."/>
            <person name="van den Hombergh J.P.T.W."/>
            <person name="van den Hondel C.A.M.J.J."/>
            <person name="van der Heijden R.T.J.M."/>
            <person name="van der Kaaij R.M."/>
            <person name="Klis F.M."/>
            <person name="Kools H.J."/>
            <person name="Kubicek C.P."/>
            <person name="van Kuyk P.A."/>
            <person name="Lauber J."/>
            <person name="Lu X."/>
            <person name="van der Maarel M.J.E.C."/>
            <person name="Meulenberg R."/>
            <person name="Menke H."/>
            <person name="Mortimer M.A."/>
            <person name="Nielsen J."/>
            <person name="Oliver S.G."/>
            <person name="Olsthoorn M."/>
            <person name="Pal K."/>
            <person name="van Peij N.N.M.E."/>
            <person name="Ram A.F.J."/>
            <person name="Rinas U."/>
            <person name="Roubos J.A."/>
            <person name="Sagt C.M.J."/>
            <person name="Schmoll M."/>
            <person name="Sun J."/>
            <person name="Ussery D."/>
            <person name="Varga J."/>
            <person name="Vervecken W."/>
            <person name="van de Vondervoort P.J.J."/>
            <person name="Wedler H."/>
            <person name="Woesten H.A.B."/>
            <person name="Zeng A.-P."/>
            <person name="van Ooyen A.J.J."/>
            <person name="Visser J."/>
            <person name="Stam H."/>
        </authorList>
    </citation>
    <scope>NUCLEOTIDE SEQUENCE [LARGE SCALE GENOMIC DNA]</scope>
    <source>
        <strain>ATCC MYA-4892 / CBS 513.88 / FGSC A1513</strain>
    </source>
</reference>
<feature type="chain" id="PRO_0000320435" description="Translation machinery-associated protein 22">
    <location>
        <begin position="1"/>
        <end position="197"/>
    </location>
</feature>
<feature type="domain" description="SUI1" evidence="2">
    <location>
        <begin position="102"/>
        <end position="173"/>
    </location>
</feature>
<proteinExistence type="inferred from homology"/>
<sequence length="197" mass="21585">MAEVAQPVPAESQAKHVVYCGVCTLPPEYCEFGGTAKKCEEWLKDAHPDMYQSLYSEEALNSNLATLSVSARERAAKDAAKKEAKAAAAEARDAERKAASKVQIKRVERNKRKHVTVITGLDIYGLENKKIAKDLGKKFATGSSMTRSAGGTEEITVQGDVSDDVKEWLLEVYGKEIPEANIELIEDKKKKKATEAP</sequence>
<organism>
    <name type="scientific">Aspergillus niger (strain ATCC MYA-4892 / CBS 513.88 / FGSC A1513)</name>
    <dbReference type="NCBI Taxonomy" id="425011"/>
    <lineage>
        <taxon>Eukaryota</taxon>
        <taxon>Fungi</taxon>
        <taxon>Dikarya</taxon>
        <taxon>Ascomycota</taxon>
        <taxon>Pezizomycotina</taxon>
        <taxon>Eurotiomycetes</taxon>
        <taxon>Eurotiomycetidae</taxon>
        <taxon>Eurotiales</taxon>
        <taxon>Aspergillaceae</taxon>
        <taxon>Aspergillus</taxon>
        <taxon>Aspergillus subgen. Circumdati</taxon>
    </lineage>
</organism>
<dbReference type="EMBL" id="AM270061">
    <property type="protein sequence ID" value="CAK38439.1"/>
    <property type="molecule type" value="Genomic_DNA"/>
</dbReference>
<dbReference type="RefSeq" id="XP_001390558.1">
    <property type="nucleotide sequence ID" value="XM_001390521.1"/>
</dbReference>
<dbReference type="SMR" id="A2QHG9"/>
<dbReference type="EnsemblFungi" id="CAK38439">
    <property type="protein sequence ID" value="CAK38439"/>
    <property type="gene ID" value="An03g06830"/>
</dbReference>
<dbReference type="GeneID" id="4980670"/>
<dbReference type="KEGG" id="ang:An03g06830"/>
<dbReference type="VEuPathDB" id="FungiDB:An03g06830"/>
<dbReference type="HOGENOM" id="CLU_073511_0_1_1"/>
<dbReference type="Proteomes" id="UP000006706">
    <property type="component" value="Chromosome 6R"/>
</dbReference>
<dbReference type="GO" id="GO:0005737">
    <property type="term" value="C:cytoplasm"/>
    <property type="evidence" value="ECO:0007669"/>
    <property type="project" value="UniProtKB-SubCell"/>
</dbReference>
<dbReference type="GO" id="GO:1990904">
    <property type="term" value="C:ribonucleoprotein complex"/>
    <property type="evidence" value="ECO:0007669"/>
    <property type="project" value="UniProtKB-KW"/>
</dbReference>
<dbReference type="GO" id="GO:0005840">
    <property type="term" value="C:ribosome"/>
    <property type="evidence" value="ECO:0007669"/>
    <property type="project" value="UniProtKB-KW"/>
</dbReference>
<dbReference type="GO" id="GO:0003729">
    <property type="term" value="F:mRNA binding"/>
    <property type="evidence" value="ECO:0007669"/>
    <property type="project" value="TreeGrafter"/>
</dbReference>
<dbReference type="GO" id="GO:0003743">
    <property type="term" value="F:translation initiation factor activity"/>
    <property type="evidence" value="ECO:0007669"/>
    <property type="project" value="InterPro"/>
</dbReference>
<dbReference type="GO" id="GO:0001731">
    <property type="term" value="P:formation of translation preinitiation complex"/>
    <property type="evidence" value="ECO:0007669"/>
    <property type="project" value="TreeGrafter"/>
</dbReference>
<dbReference type="GO" id="GO:0000184">
    <property type="term" value="P:nuclear-transcribed mRNA catabolic process, nonsense-mediated decay"/>
    <property type="evidence" value="ECO:0007669"/>
    <property type="project" value="EnsemblFungi"/>
</dbReference>
<dbReference type="GO" id="GO:0032790">
    <property type="term" value="P:ribosome disassembly"/>
    <property type="evidence" value="ECO:0007669"/>
    <property type="project" value="EnsemblFungi"/>
</dbReference>
<dbReference type="GO" id="GO:0002188">
    <property type="term" value="P:translation reinitiation"/>
    <property type="evidence" value="ECO:0007669"/>
    <property type="project" value="TreeGrafter"/>
</dbReference>
<dbReference type="CDD" id="cd11607">
    <property type="entry name" value="DENR_C"/>
    <property type="match status" value="1"/>
</dbReference>
<dbReference type="FunFam" id="3.30.780.10:FF:000014">
    <property type="entry name" value="Translation machinery-associated protein 22"/>
    <property type="match status" value="1"/>
</dbReference>
<dbReference type="Gene3D" id="3.30.780.10">
    <property type="entry name" value="SUI1-like domain"/>
    <property type="match status" value="1"/>
</dbReference>
<dbReference type="InterPro" id="IPR050318">
    <property type="entry name" value="DENR/SUI1_TIF"/>
</dbReference>
<dbReference type="InterPro" id="IPR046447">
    <property type="entry name" value="DENR_C"/>
</dbReference>
<dbReference type="InterPro" id="IPR048517">
    <property type="entry name" value="DENR_N"/>
</dbReference>
<dbReference type="InterPro" id="IPR001950">
    <property type="entry name" value="SUI1"/>
</dbReference>
<dbReference type="InterPro" id="IPR036877">
    <property type="entry name" value="SUI1_dom_sf"/>
</dbReference>
<dbReference type="PANTHER" id="PTHR12789:SF0">
    <property type="entry name" value="DENSITY-REGULATED PROTEIN"/>
    <property type="match status" value="1"/>
</dbReference>
<dbReference type="PANTHER" id="PTHR12789">
    <property type="entry name" value="DENSITY-REGULATED PROTEIN HOMOLOG"/>
    <property type="match status" value="1"/>
</dbReference>
<dbReference type="Pfam" id="PF21023">
    <property type="entry name" value="DENR_N"/>
    <property type="match status" value="1"/>
</dbReference>
<dbReference type="Pfam" id="PF01253">
    <property type="entry name" value="SUI1"/>
    <property type="match status" value="1"/>
</dbReference>
<dbReference type="SUPFAM" id="SSF55159">
    <property type="entry name" value="eIF1-like"/>
    <property type="match status" value="1"/>
</dbReference>
<dbReference type="PROSITE" id="PS50296">
    <property type="entry name" value="SUI1"/>
    <property type="match status" value="1"/>
</dbReference>
<accession>A2QHG9</accession>
<comment type="subunit">
    <text evidence="1">Interacts with the 40S ribosomal subunit.</text>
</comment>
<comment type="subcellular location">
    <subcellularLocation>
        <location evidence="1">Cytoplasm</location>
    </subcellularLocation>
</comment>
<comment type="domain">
    <text>The SUI1 domain may be involved in RNA binding.</text>
</comment>
<comment type="similarity">
    <text evidence="3">Belongs to the DENR family.</text>
</comment>
<keyword id="KW-0963">Cytoplasm</keyword>
<keyword id="KW-1185">Reference proteome</keyword>
<keyword id="KW-0687">Ribonucleoprotein</keyword>
<keyword id="KW-0689">Ribosomal protein</keyword>
<name>DENR_ASPNC</name>
<protein>
    <recommendedName>
        <fullName>Translation machinery-associated protein 22</fullName>
    </recommendedName>
</protein>